<protein>
    <recommendedName>
        <fullName>Ethylene receptor</fullName>
        <ecNumber>2.7.13.3</ecNumber>
    </recommendedName>
    <alternativeName>
        <fullName>PE-ETR1</fullName>
    </alternativeName>
</protein>
<gene>
    <name type="primary">ETR1</name>
</gene>
<proteinExistence type="evidence at transcript level"/>
<sequence length="738" mass="82684">MESCNCIEPQWPAEELLMKYQYISDFFIALAYFSIPLELIYFVKKSAVFPYRWVLVQFGAFIVLCGATHLINLWTFTMHSRTVATVMTIAKVLTAVVSCATALMLVHIIPDLLSVKTRELFLKNKAAELDREMGLIRTQEETGRHVRMLTHEIRSTLDRHTILRTTLVELGRTLALEECALWMPTRTGLELQLSYTLRQQNPVGYTVPIQLPVINQVFSTNRAVKISPNCPVARLRPLAGKYVPGEVVAVRVPLLHLNNFQINDWPELSTRRYALMVLMLPSDSARQWRVHELELVEVVADQVAVALSHAAILEESMRARDLLMEQNVALDLARREAETAIRARNDFLAVMNHEMRTPMHAVIALSSLLQETELTPEQRLMVETILKSSNLLATLINDVLDLSKLEDGSLQLDSGTFNLHAVFREVLNLIKPIASVKKLLLLLNLAPDLPEYAVGDEKRLIQIILNIVGNAMKFSKEGSISITAIVAKLESLRDARVPDFFPTPSENHFYLRVQVKDSGVGINPQDIPKLFIKFAQTQTTGARNSSGSGLGLAICRRFVNLMDGHIWLESEGLGKGCTAIFIVKLGIPERLNESKPPFMSKVAVDHGQTTFPGLKVLLMDDNGVSRMVTKGLLLHLGCDVTTVGSSEECIRVASQDHRVVFMDVGMPEGFEAAVRLHEKFTKRHERPLVVALTASTDRMTKENCMRVGMDGAILKPVSVDKMRSVLSDLLEHKVLFEC</sequence>
<evidence type="ECO:0000250" key="1"/>
<evidence type="ECO:0000255" key="2"/>
<evidence type="ECO:0000255" key="3">
    <source>
        <dbReference type="PROSITE-ProRule" id="PRU00107"/>
    </source>
</evidence>
<evidence type="ECO:0000255" key="4">
    <source>
        <dbReference type="PROSITE-ProRule" id="PRU00169"/>
    </source>
</evidence>
<evidence type="ECO:0000305" key="5"/>
<name>ETR1_PASED</name>
<feature type="chain" id="PRO_0000081419" description="Ethylene receptor">
    <location>
        <begin position="1"/>
        <end position="738"/>
    </location>
</feature>
<feature type="transmembrane region" description="Helical" evidence="2">
    <location>
        <begin position="23"/>
        <end position="43"/>
    </location>
</feature>
<feature type="transmembrane region" description="Helical" evidence="2">
    <location>
        <begin position="54"/>
        <end position="74"/>
    </location>
</feature>
<feature type="transmembrane region" description="Helical" evidence="2">
    <location>
        <begin position="89"/>
        <end position="109"/>
    </location>
</feature>
<feature type="domain" description="GAF">
    <location>
        <begin position="158"/>
        <end position="307"/>
    </location>
</feature>
<feature type="domain" description="Histidine kinase" evidence="3">
    <location>
        <begin position="350"/>
        <end position="589"/>
    </location>
</feature>
<feature type="domain" description="Response regulatory" evidence="4">
    <location>
        <begin position="615"/>
        <end position="730"/>
    </location>
</feature>
<feature type="binding site" evidence="1">
    <location>
        <position position="65"/>
    </location>
    <ligand>
        <name>Cu cation</name>
        <dbReference type="ChEBI" id="CHEBI:23378"/>
    </ligand>
</feature>
<feature type="binding site" evidence="1">
    <location>
        <position position="69"/>
    </location>
    <ligand>
        <name>Cu cation</name>
        <dbReference type="ChEBI" id="CHEBI:23378"/>
    </ligand>
</feature>
<feature type="modified residue" description="Phosphohistidine; by autocatalysis" evidence="3">
    <location>
        <position position="353"/>
    </location>
</feature>
<feature type="modified residue" description="4-aspartylphosphate" evidence="4">
    <location>
        <position position="663"/>
    </location>
</feature>
<feature type="disulfide bond" description="Interchain" evidence="1">
    <location>
        <position position="4"/>
    </location>
</feature>
<feature type="disulfide bond" description="Interchain" evidence="1">
    <location>
        <position position="6"/>
    </location>
</feature>
<accession>Q9ZWL6</accession>
<organism>
    <name type="scientific">Passiflora edulis</name>
    <name type="common">Passion fruit</name>
    <dbReference type="NCBI Taxonomy" id="78168"/>
    <lineage>
        <taxon>Eukaryota</taxon>
        <taxon>Viridiplantae</taxon>
        <taxon>Streptophyta</taxon>
        <taxon>Embryophyta</taxon>
        <taxon>Tracheophyta</taxon>
        <taxon>Spermatophyta</taxon>
        <taxon>Magnoliopsida</taxon>
        <taxon>eudicotyledons</taxon>
        <taxon>Gunneridae</taxon>
        <taxon>Pentapetalae</taxon>
        <taxon>rosids</taxon>
        <taxon>fabids</taxon>
        <taxon>Malpighiales</taxon>
        <taxon>Passifloraceae</taxon>
        <taxon>Passiflora</taxon>
    </lineage>
</organism>
<reference key="1">
    <citation type="journal article" date="1998" name="Plant Cell Physiol.">
        <title>Differential expression of genes involved in the biosynthesis and perception of ethylene during ripening of passion fruit (Passiflora edulis Sims).</title>
        <authorList>
            <person name="Mita S."/>
            <person name="Kawamura S."/>
            <person name="Yamawaki K."/>
            <person name="Nakamura K."/>
            <person name="Hyodo H."/>
        </authorList>
    </citation>
    <scope>NUCLEOTIDE SEQUENCE [MRNA]</scope>
</reference>
<comment type="function">
    <text evidence="1">May act early in the ethylene signal transduction pathway, possibly as an ethylene receptor, or as a regulator of the pathway.</text>
</comment>
<comment type="catalytic activity">
    <reaction>
        <text>ATP + protein L-histidine = ADP + protein N-phospho-L-histidine.</text>
        <dbReference type="EC" id="2.7.13.3"/>
    </reaction>
</comment>
<comment type="cofactor">
    <cofactor evidence="1">
        <name>Cu cation</name>
        <dbReference type="ChEBI" id="CHEBI:23378"/>
    </cofactor>
    <text evidence="1">Binds 1 copper ion per dimer.</text>
</comment>
<comment type="subunit">
    <text evidence="1">Homodimer; disulfide-linked.</text>
</comment>
<comment type="subcellular location">
    <subcellularLocation>
        <location evidence="1">Endoplasmic reticulum membrane</location>
        <topology evidence="1">Multi-pass membrane protein</topology>
    </subcellularLocation>
</comment>
<comment type="tissue specificity">
    <text>Higher expression in arils than in seeds.</text>
</comment>
<comment type="developmental stage">
    <text>Constitutive expression during ripening.</text>
</comment>
<comment type="PTM">
    <text evidence="1">Activation probably requires a transfer of a phosphate group between a His in the transmitter domain and an Asp of the receiver domain.</text>
</comment>
<comment type="similarity">
    <text evidence="5">Belongs to the ethylene receptor family.</text>
</comment>
<keyword id="KW-0067">ATP-binding</keyword>
<keyword id="KW-0186">Copper</keyword>
<keyword id="KW-1015">Disulfide bond</keyword>
<keyword id="KW-0256">Endoplasmic reticulum</keyword>
<keyword id="KW-0936">Ethylene signaling pathway</keyword>
<keyword id="KW-0418">Kinase</keyword>
<keyword id="KW-0472">Membrane</keyword>
<keyword id="KW-0479">Metal-binding</keyword>
<keyword id="KW-0547">Nucleotide-binding</keyword>
<keyword id="KW-0597">Phosphoprotein</keyword>
<keyword id="KW-0675">Receptor</keyword>
<keyword id="KW-0808">Transferase</keyword>
<keyword id="KW-0812">Transmembrane</keyword>
<keyword id="KW-1133">Transmembrane helix</keyword>
<keyword id="KW-0902">Two-component regulatory system</keyword>
<dbReference type="EC" id="2.7.13.3"/>
<dbReference type="EMBL" id="AB015496">
    <property type="protein sequence ID" value="BAA37136.1"/>
    <property type="molecule type" value="mRNA"/>
</dbReference>
<dbReference type="SMR" id="Q9ZWL6"/>
<dbReference type="BRENDA" id="2.7.13.3">
    <property type="organism ID" value="4556"/>
</dbReference>
<dbReference type="GO" id="GO:0005789">
    <property type="term" value="C:endoplasmic reticulum membrane"/>
    <property type="evidence" value="ECO:0007669"/>
    <property type="project" value="UniProtKB-SubCell"/>
</dbReference>
<dbReference type="GO" id="GO:0005524">
    <property type="term" value="F:ATP binding"/>
    <property type="evidence" value="ECO:0007669"/>
    <property type="project" value="UniProtKB-KW"/>
</dbReference>
<dbReference type="GO" id="GO:0051740">
    <property type="term" value="F:ethylene binding"/>
    <property type="evidence" value="ECO:0007669"/>
    <property type="project" value="InterPro"/>
</dbReference>
<dbReference type="GO" id="GO:0038199">
    <property type="term" value="F:ethylene receptor activity"/>
    <property type="evidence" value="ECO:0007669"/>
    <property type="project" value="InterPro"/>
</dbReference>
<dbReference type="GO" id="GO:0046872">
    <property type="term" value="F:metal ion binding"/>
    <property type="evidence" value="ECO:0007669"/>
    <property type="project" value="UniProtKB-KW"/>
</dbReference>
<dbReference type="GO" id="GO:0000155">
    <property type="term" value="F:phosphorelay sensor kinase activity"/>
    <property type="evidence" value="ECO:0007669"/>
    <property type="project" value="InterPro"/>
</dbReference>
<dbReference type="GO" id="GO:0010105">
    <property type="term" value="P:negative regulation of ethylene-activated signaling pathway"/>
    <property type="evidence" value="ECO:0007669"/>
    <property type="project" value="UniProtKB-ARBA"/>
</dbReference>
<dbReference type="CDD" id="cd16922">
    <property type="entry name" value="HATPase_EvgS-ArcB-TorS-like"/>
    <property type="match status" value="1"/>
</dbReference>
<dbReference type="CDD" id="cd00082">
    <property type="entry name" value="HisKA"/>
    <property type="match status" value="1"/>
</dbReference>
<dbReference type="CDD" id="cd19933">
    <property type="entry name" value="REC_ETR-like"/>
    <property type="match status" value="1"/>
</dbReference>
<dbReference type="FunFam" id="3.40.50.2300:FF:000192">
    <property type="entry name" value="Ethylene receptor"/>
    <property type="match status" value="1"/>
</dbReference>
<dbReference type="FunFam" id="1.10.287.130:FF:000004">
    <property type="entry name" value="Ethylene receptor 1"/>
    <property type="match status" value="1"/>
</dbReference>
<dbReference type="FunFam" id="3.30.565.10:FF:000030">
    <property type="entry name" value="Ethylene receptor 1"/>
    <property type="match status" value="1"/>
</dbReference>
<dbReference type="FunFam" id="3.30.450.40:FF:000026">
    <property type="entry name" value="Ethylene response sensor"/>
    <property type="match status" value="1"/>
</dbReference>
<dbReference type="Gene3D" id="1.10.287.130">
    <property type="match status" value="1"/>
</dbReference>
<dbReference type="Gene3D" id="3.30.450.40">
    <property type="match status" value="1"/>
</dbReference>
<dbReference type="Gene3D" id="3.40.50.2300">
    <property type="match status" value="1"/>
</dbReference>
<dbReference type="Gene3D" id="3.30.565.10">
    <property type="entry name" value="Histidine kinase-like ATPase, C-terminal domain"/>
    <property type="match status" value="1"/>
</dbReference>
<dbReference type="InterPro" id="IPR011006">
    <property type="entry name" value="CheY-like_superfamily"/>
</dbReference>
<dbReference type="InterPro" id="IPR014525">
    <property type="entry name" value="ETR"/>
</dbReference>
<dbReference type="InterPro" id="IPR003018">
    <property type="entry name" value="GAF"/>
</dbReference>
<dbReference type="InterPro" id="IPR029016">
    <property type="entry name" value="GAF-like_dom_sf"/>
</dbReference>
<dbReference type="InterPro" id="IPR036890">
    <property type="entry name" value="HATPase_C_sf"/>
</dbReference>
<dbReference type="InterPro" id="IPR005467">
    <property type="entry name" value="His_kinase_dom"/>
</dbReference>
<dbReference type="InterPro" id="IPR003661">
    <property type="entry name" value="HisK_dim/P_dom"/>
</dbReference>
<dbReference type="InterPro" id="IPR036097">
    <property type="entry name" value="HisK_dim/P_sf"/>
</dbReference>
<dbReference type="InterPro" id="IPR004358">
    <property type="entry name" value="Sig_transdc_His_kin-like_C"/>
</dbReference>
<dbReference type="InterPro" id="IPR001789">
    <property type="entry name" value="Sig_transdc_resp-reg_receiver"/>
</dbReference>
<dbReference type="PANTHER" id="PTHR24423:SF615">
    <property type="entry name" value="ETHYLENE RECEPTOR 1"/>
    <property type="match status" value="1"/>
</dbReference>
<dbReference type="PANTHER" id="PTHR24423">
    <property type="entry name" value="TWO-COMPONENT SENSOR HISTIDINE KINASE"/>
    <property type="match status" value="1"/>
</dbReference>
<dbReference type="Pfam" id="PF25487">
    <property type="entry name" value="ETR1_N"/>
    <property type="match status" value="1"/>
</dbReference>
<dbReference type="Pfam" id="PF01590">
    <property type="entry name" value="GAF"/>
    <property type="match status" value="1"/>
</dbReference>
<dbReference type="Pfam" id="PF02518">
    <property type="entry name" value="HATPase_c"/>
    <property type="match status" value="1"/>
</dbReference>
<dbReference type="Pfam" id="PF00512">
    <property type="entry name" value="HisKA"/>
    <property type="match status" value="1"/>
</dbReference>
<dbReference type="Pfam" id="PF00072">
    <property type="entry name" value="Response_reg"/>
    <property type="match status" value="1"/>
</dbReference>
<dbReference type="PIRSF" id="PIRSF026389">
    <property type="entry name" value="Ethyln_sen_HK"/>
    <property type="match status" value="1"/>
</dbReference>
<dbReference type="PRINTS" id="PR00344">
    <property type="entry name" value="BCTRLSENSOR"/>
</dbReference>
<dbReference type="SMART" id="SM00065">
    <property type="entry name" value="GAF"/>
    <property type="match status" value="1"/>
</dbReference>
<dbReference type="SMART" id="SM00387">
    <property type="entry name" value="HATPase_c"/>
    <property type="match status" value="1"/>
</dbReference>
<dbReference type="SMART" id="SM00388">
    <property type="entry name" value="HisKA"/>
    <property type="match status" value="1"/>
</dbReference>
<dbReference type="SMART" id="SM00448">
    <property type="entry name" value="REC"/>
    <property type="match status" value="1"/>
</dbReference>
<dbReference type="SUPFAM" id="SSF55874">
    <property type="entry name" value="ATPase domain of HSP90 chaperone/DNA topoisomerase II/histidine kinase"/>
    <property type="match status" value="1"/>
</dbReference>
<dbReference type="SUPFAM" id="SSF52172">
    <property type="entry name" value="CheY-like"/>
    <property type="match status" value="1"/>
</dbReference>
<dbReference type="SUPFAM" id="SSF55781">
    <property type="entry name" value="GAF domain-like"/>
    <property type="match status" value="1"/>
</dbReference>
<dbReference type="SUPFAM" id="SSF47384">
    <property type="entry name" value="Homodimeric domain of signal transducing histidine kinase"/>
    <property type="match status" value="1"/>
</dbReference>
<dbReference type="PROSITE" id="PS50109">
    <property type="entry name" value="HIS_KIN"/>
    <property type="match status" value="1"/>
</dbReference>
<dbReference type="PROSITE" id="PS50110">
    <property type="entry name" value="RESPONSE_REGULATORY"/>
    <property type="match status" value="1"/>
</dbReference>